<name>ERA_ELUMP</name>
<dbReference type="EMBL" id="CP001055">
    <property type="protein sequence ID" value="ACC97916.1"/>
    <property type="molecule type" value="Genomic_DNA"/>
</dbReference>
<dbReference type="RefSeq" id="WP_012414531.1">
    <property type="nucleotide sequence ID" value="NC_010644.1"/>
</dbReference>
<dbReference type="SMR" id="B2KB94"/>
<dbReference type="STRING" id="445932.Emin_0358"/>
<dbReference type="KEGG" id="emi:Emin_0358"/>
<dbReference type="HOGENOM" id="CLU_038009_1_2_0"/>
<dbReference type="OrthoDB" id="9805918at2"/>
<dbReference type="Proteomes" id="UP000001029">
    <property type="component" value="Chromosome"/>
</dbReference>
<dbReference type="GO" id="GO:0005737">
    <property type="term" value="C:cytoplasm"/>
    <property type="evidence" value="ECO:0007669"/>
    <property type="project" value="UniProtKB-SubCell"/>
</dbReference>
<dbReference type="GO" id="GO:0005886">
    <property type="term" value="C:plasma membrane"/>
    <property type="evidence" value="ECO:0007669"/>
    <property type="project" value="UniProtKB-SubCell"/>
</dbReference>
<dbReference type="GO" id="GO:0005525">
    <property type="term" value="F:GTP binding"/>
    <property type="evidence" value="ECO:0007669"/>
    <property type="project" value="UniProtKB-UniRule"/>
</dbReference>
<dbReference type="GO" id="GO:0003924">
    <property type="term" value="F:GTPase activity"/>
    <property type="evidence" value="ECO:0007669"/>
    <property type="project" value="UniProtKB-UniRule"/>
</dbReference>
<dbReference type="GO" id="GO:0043024">
    <property type="term" value="F:ribosomal small subunit binding"/>
    <property type="evidence" value="ECO:0007669"/>
    <property type="project" value="TreeGrafter"/>
</dbReference>
<dbReference type="GO" id="GO:0070181">
    <property type="term" value="F:small ribosomal subunit rRNA binding"/>
    <property type="evidence" value="ECO:0007669"/>
    <property type="project" value="UniProtKB-UniRule"/>
</dbReference>
<dbReference type="GO" id="GO:0000028">
    <property type="term" value="P:ribosomal small subunit assembly"/>
    <property type="evidence" value="ECO:0007669"/>
    <property type="project" value="TreeGrafter"/>
</dbReference>
<dbReference type="CDD" id="cd04163">
    <property type="entry name" value="Era"/>
    <property type="match status" value="1"/>
</dbReference>
<dbReference type="CDD" id="cd22534">
    <property type="entry name" value="KH-II_Era"/>
    <property type="match status" value="1"/>
</dbReference>
<dbReference type="Gene3D" id="3.30.300.20">
    <property type="match status" value="1"/>
</dbReference>
<dbReference type="Gene3D" id="3.40.50.300">
    <property type="entry name" value="P-loop containing nucleotide triphosphate hydrolases"/>
    <property type="match status" value="1"/>
</dbReference>
<dbReference type="HAMAP" id="MF_00367">
    <property type="entry name" value="GTPase_Era"/>
    <property type="match status" value="1"/>
</dbReference>
<dbReference type="InterPro" id="IPR030388">
    <property type="entry name" value="G_ERA_dom"/>
</dbReference>
<dbReference type="InterPro" id="IPR006073">
    <property type="entry name" value="GTP-bd"/>
</dbReference>
<dbReference type="InterPro" id="IPR005662">
    <property type="entry name" value="GTPase_Era-like"/>
</dbReference>
<dbReference type="InterPro" id="IPR015946">
    <property type="entry name" value="KH_dom-like_a/b"/>
</dbReference>
<dbReference type="InterPro" id="IPR004044">
    <property type="entry name" value="KH_dom_type_2"/>
</dbReference>
<dbReference type="InterPro" id="IPR009019">
    <property type="entry name" value="KH_sf_prok-type"/>
</dbReference>
<dbReference type="InterPro" id="IPR027417">
    <property type="entry name" value="P-loop_NTPase"/>
</dbReference>
<dbReference type="InterPro" id="IPR005225">
    <property type="entry name" value="Small_GTP-bd"/>
</dbReference>
<dbReference type="NCBIfam" id="TIGR00436">
    <property type="entry name" value="era"/>
    <property type="match status" value="1"/>
</dbReference>
<dbReference type="NCBIfam" id="NF000908">
    <property type="entry name" value="PRK00089.1"/>
    <property type="match status" value="1"/>
</dbReference>
<dbReference type="NCBIfam" id="TIGR00231">
    <property type="entry name" value="small_GTP"/>
    <property type="match status" value="1"/>
</dbReference>
<dbReference type="PANTHER" id="PTHR42698">
    <property type="entry name" value="GTPASE ERA"/>
    <property type="match status" value="1"/>
</dbReference>
<dbReference type="PANTHER" id="PTHR42698:SF1">
    <property type="entry name" value="GTPASE ERA, MITOCHONDRIAL"/>
    <property type="match status" value="1"/>
</dbReference>
<dbReference type="Pfam" id="PF07650">
    <property type="entry name" value="KH_2"/>
    <property type="match status" value="1"/>
</dbReference>
<dbReference type="Pfam" id="PF01926">
    <property type="entry name" value="MMR_HSR1"/>
    <property type="match status" value="1"/>
</dbReference>
<dbReference type="PRINTS" id="PR00326">
    <property type="entry name" value="GTP1OBG"/>
</dbReference>
<dbReference type="SUPFAM" id="SSF52540">
    <property type="entry name" value="P-loop containing nucleoside triphosphate hydrolases"/>
    <property type="match status" value="1"/>
</dbReference>
<dbReference type="SUPFAM" id="SSF54814">
    <property type="entry name" value="Prokaryotic type KH domain (KH-domain type II)"/>
    <property type="match status" value="1"/>
</dbReference>
<dbReference type="PROSITE" id="PS51713">
    <property type="entry name" value="G_ERA"/>
    <property type="match status" value="1"/>
</dbReference>
<dbReference type="PROSITE" id="PS50823">
    <property type="entry name" value="KH_TYPE_2"/>
    <property type="match status" value="1"/>
</dbReference>
<comment type="function">
    <text evidence="1">An essential GTPase that binds both GDP and GTP, with rapid nucleotide exchange. Plays a role in 16S rRNA processing and 30S ribosomal subunit biogenesis and possibly also in cell cycle regulation and energy metabolism.</text>
</comment>
<comment type="subunit">
    <text evidence="1">Monomer.</text>
</comment>
<comment type="subcellular location">
    <subcellularLocation>
        <location>Cytoplasm</location>
    </subcellularLocation>
    <subcellularLocation>
        <location evidence="1">Cell inner membrane</location>
        <topology evidence="1">Peripheral membrane protein</topology>
    </subcellularLocation>
</comment>
<comment type="similarity">
    <text evidence="1 2">Belongs to the TRAFAC class TrmE-Era-EngA-EngB-Septin-like GTPase superfamily. Era GTPase family.</text>
</comment>
<protein>
    <recommendedName>
        <fullName evidence="1">GTPase Era</fullName>
    </recommendedName>
</protein>
<accession>B2KB94</accession>
<proteinExistence type="inferred from homology"/>
<evidence type="ECO:0000255" key="1">
    <source>
        <dbReference type="HAMAP-Rule" id="MF_00367"/>
    </source>
</evidence>
<evidence type="ECO:0000255" key="2">
    <source>
        <dbReference type="PROSITE-ProRule" id="PRU01050"/>
    </source>
</evidence>
<sequence>MTDKDFKSGFAVMAGLPNAGKSTLLNAVAGGLLSAVSPKPQMTRQNIIALSEGEKHQIIFVDTPGFLEAKYKLQEIMKGSLSQALEEDADVAVFVFDPLQEYSAHKKLISKLQNIKCPLFVLINKADTQPVEKLRKIEEQLKKDLPDIEKTFFISAKQNKGVAEFKTAVAETLPFNPPYFPQGQWTDRWERFYVAEFIREQIFNLYEKEVPYCTYVEVETFTEDLGPKNYIKAKIYVERESQKPIIIGSKGSSIAKLRVSAQKRIEEFLGRKYRLELEVSVEPQWRSSKKCLQKFGFITE</sequence>
<reference key="1">
    <citation type="journal article" date="2009" name="Appl. Environ. Microbiol.">
        <title>Genomic analysis of 'Elusimicrobium minutum,' the first cultivated representative of the phylum 'Elusimicrobia' (formerly termite group 1).</title>
        <authorList>
            <person name="Herlemann D.P.R."/>
            <person name="Geissinger O."/>
            <person name="Ikeda-Ohtsubo W."/>
            <person name="Kunin V."/>
            <person name="Sun H."/>
            <person name="Lapidus A."/>
            <person name="Hugenholtz P."/>
            <person name="Brune A."/>
        </authorList>
    </citation>
    <scope>NUCLEOTIDE SEQUENCE [LARGE SCALE GENOMIC DNA]</scope>
    <source>
        <strain>Pei191</strain>
    </source>
</reference>
<organism>
    <name type="scientific">Elusimicrobium minutum (strain Pei191)</name>
    <dbReference type="NCBI Taxonomy" id="445932"/>
    <lineage>
        <taxon>Bacteria</taxon>
        <taxon>Pseudomonadati</taxon>
        <taxon>Elusimicrobiota</taxon>
        <taxon>Elusimicrobia</taxon>
        <taxon>Elusimicrobiales</taxon>
        <taxon>Elusimicrobiaceae</taxon>
        <taxon>Elusimicrobium</taxon>
    </lineage>
</organism>
<gene>
    <name evidence="1" type="primary">era</name>
    <name type="ordered locus">Emin_0358</name>
</gene>
<keyword id="KW-0997">Cell inner membrane</keyword>
<keyword id="KW-1003">Cell membrane</keyword>
<keyword id="KW-0963">Cytoplasm</keyword>
<keyword id="KW-0342">GTP-binding</keyword>
<keyword id="KW-0472">Membrane</keyword>
<keyword id="KW-0547">Nucleotide-binding</keyword>
<keyword id="KW-1185">Reference proteome</keyword>
<keyword id="KW-0690">Ribosome biogenesis</keyword>
<keyword id="KW-0694">RNA-binding</keyword>
<keyword id="KW-0699">rRNA-binding</keyword>
<feature type="chain" id="PRO_1000121326" description="GTPase Era">
    <location>
        <begin position="1"/>
        <end position="300"/>
    </location>
</feature>
<feature type="domain" description="Era-type G" evidence="2">
    <location>
        <begin position="7"/>
        <end position="175"/>
    </location>
</feature>
<feature type="domain" description="KH type-2" evidence="1">
    <location>
        <begin position="198"/>
        <end position="283"/>
    </location>
</feature>
<feature type="region of interest" description="G1" evidence="2">
    <location>
        <begin position="15"/>
        <end position="22"/>
    </location>
</feature>
<feature type="region of interest" description="G2" evidence="2">
    <location>
        <begin position="41"/>
        <end position="45"/>
    </location>
</feature>
<feature type="region of interest" description="G3" evidence="2">
    <location>
        <begin position="62"/>
        <end position="65"/>
    </location>
</feature>
<feature type="region of interest" description="G4" evidence="2">
    <location>
        <begin position="124"/>
        <end position="127"/>
    </location>
</feature>
<feature type="region of interest" description="G5" evidence="2">
    <location>
        <begin position="154"/>
        <end position="156"/>
    </location>
</feature>
<feature type="binding site" evidence="1">
    <location>
        <begin position="15"/>
        <end position="22"/>
    </location>
    <ligand>
        <name>GTP</name>
        <dbReference type="ChEBI" id="CHEBI:37565"/>
    </ligand>
</feature>
<feature type="binding site" evidence="1">
    <location>
        <begin position="62"/>
        <end position="66"/>
    </location>
    <ligand>
        <name>GTP</name>
        <dbReference type="ChEBI" id="CHEBI:37565"/>
    </ligand>
</feature>
<feature type="binding site" evidence="1">
    <location>
        <begin position="124"/>
        <end position="127"/>
    </location>
    <ligand>
        <name>GTP</name>
        <dbReference type="ChEBI" id="CHEBI:37565"/>
    </ligand>
</feature>